<evidence type="ECO:0000255" key="1">
    <source>
        <dbReference type="HAMAP-Rule" id="MF_00216"/>
    </source>
</evidence>
<evidence type="ECO:0000256" key="2">
    <source>
        <dbReference type="SAM" id="MobiDB-lite"/>
    </source>
</evidence>
<dbReference type="EMBL" id="CP000099">
    <property type="protein sequence ID" value="AAZ71453.1"/>
    <property type="molecule type" value="Genomic_DNA"/>
</dbReference>
<dbReference type="SMR" id="Q469I9"/>
<dbReference type="STRING" id="269797.Mbar_A2540"/>
<dbReference type="PaxDb" id="269797-Mbar_A2540"/>
<dbReference type="KEGG" id="mba:Mbar_A2540"/>
<dbReference type="eggNOG" id="arCOG01179">
    <property type="taxonomic scope" value="Archaea"/>
</dbReference>
<dbReference type="HOGENOM" id="CLU_109098_1_0_2"/>
<dbReference type="GO" id="GO:0003723">
    <property type="term" value="F:RNA binding"/>
    <property type="evidence" value="ECO:0007669"/>
    <property type="project" value="InterPro"/>
</dbReference>
<dbReference type="GO" id="GO:0003743">
    <property type="term" value="F:translation initiation factor activity"/>
    <property type="evidence" value="ECO:0007669"/>
    <property type="project" value="UniProtKB-UniRule"/>
</dbReference>
<dbReference type="CDD" id="cd05793">
    <property type="entry name" value="S1_IF1A"/>
    <property type="match status" value="1"/>
</dbReference>
<dbReference type="Gene3D" id="2.40.50.140">
    <property type="entry name" value="Nucleic acid-binding proteins"/>
    <property type="match status" value="1"/>
</dbReference>
<dbReference type="HAMAP" id="MF_00216">
    <property type="entry name" value="aIF_1A"/>
    <property type="match status" value="1"/>
</dbReference>
<dbReference type="InterPro" id="IPR012340">
    <property type="entry name" value="NA-bd_OB-fold"/>
</dbReference>
<dbReference type="InterPro" id="IPR006196">
    <property type="entry name" value="RNA-binding_domain_S1_IF1"/>
</dbReference>
<dbReference type="InterPro" id="IPR001253">
    <property type="entry name" value="TIF_eIF-1A"/>
</dbReference>
<dbReference type="InterPro" id="IPR018104">
    <property type="entry name" value="TIF_eIF-1A_CS"/>
</dbReference>
<dbReference type="NCBIfam" id="TIGR00523">
    <property type="entry name" value="eIF-1A"/>
    <property type="match status" value="1"/>
</dbReference>
<dbReference type="NCBIfam" id="NF003084">
    <property type="entry name" value="PRK04012.1-3"/>
    <property type="match status" value="1"/>
</dbReference>
<dbReference type="NCBIfam" id="NF003085">
    <property type="entry name" value="PRK04012.1-5"/>
    <property type="match status" value="1"/>
</dbReference>
<dbReference type="PANTHER" id="PTHR21668">
    <property type="entry name" value="EIF-1A"/>
    <property type="match status" value="1"/>
</dbReference>
<dbReference type="Pfam" id="PF01176">
    <property type="entry name" value="eIF-1a"/>
    <property type="match status" value="1"/>
</dbReference>
<dbReference type="SMART" id="SM00652">
    <property type="entry name" value="eIF1a"/>
    <property type="match status" value="1"/>
</dbReference>
<dbReference type="SUPFAM" id="SSF50249">
    <property type="entry name" value="Nucleic acid-binding proteins"/>
    <property type="match status" value="1"/>
</dbReference>
<dbReference type="PROSITE" id="PS01262">
    <property type="entry name" value="IF1A"/>
    <property type="match status" value="1"/>
</dbReference>
<dbReference type="PROSITE" id="PS50832">
    <property type="entry name" value="S1_IF1_TYPE"/>
    <property type="match status" value="1"/>
</dbReference>
<comment type="function">
    <text evidence="1">Seems to be required for maximal rate of protein biosynthesis. Enhances ribosome dissociation into subunits and stabilizes the binding of the initiator Met-tRNA(I) to 40 S ribosomal subunits.</text>
</comment>
<comment type="similarity">
    <text evidence="1">Belongs to the eIF-1A family.</text>
</comment>
<sequence length="115" mass="13353">MANYRSTIRHRNSGSRKSVSGDTHEVTRVRTPQKDRNEVLATVLNLLGSKRVTLQCMDGVVRMGRIPGSKKKRMWIREGDIVIANPWEIQDSKADVTWKYTRPQVEWLERKGYLN</sequence>
<proteinExistence type="inferred from homology"/>
<reference key="1">
    <citation type="journal article" date="2006" name="J. Bacteriol.">
        <title>The Methanosarcina barkeri genome: comparative analysis with Methanosarcina acetivorans and Methanosarcina mazei reveals extensive rearrangement within methanosarcinal genomes.</title>
        <authorList>
            <person name="Maeder D.L."/>
            <person name="Anderson I."/>
            <person name="Brettin T.S."/>
            <person name="Bruce D.C."/>
            <person name="Gilna P."/>
            <person name="Han C.S."/>
            <person name="Lapidus A."/>
            <person name="Metcalf W.W."/>
            <person name="Saunders E."/>
            <person name="Tapia R."/>
            <person name="Sowers K.R."/>
        </authorList>
    </citation>
    <scope>NUCLEOTIDE SEQUENCE [LARGE SCALE GENOMIC DNA]</scope>
    <source>
        <strain>Fusaro / DSM 804</strain>
    </source>
</reference>
<accession>Q469I9</accession>
<organism>
    <name type="scientific">Methanosarcina barkeri (strain Fusaro / DSM 804)</name>
    <dbReference type="NCBI Taxonomy" id="269797"/>
    <lineage>
        <taxon>Archaea</taxon>
        <taxon>Methanobacteriati</taxon>
        <taxon>Methanobacteriota</taxon>
        <taxon>Stenosarchaea group</taxon>
        <taxon>Methanomicrobia</taxon>
        <taxon>Methanosarcinales</taxon>
        <taxon>Methanosarcinaceae</taxon>
        <taxon>Methanosarcina</taxon>
    </lineage>
</organism>
<protein>
    <recommendedName>
        <fullName evidence="1">Translation initiation factor 1A 2</fullName>
        <shortName evidence="1">aIF-1A 2</shortName>
    </recommendedName>
</protein>
<name>IF1A2_METBF</name>
<keyword id="KW-0396">Initiation factor</keyword>
<keyword id="KW-0648">Protein biosynthesis</keyword>
<gene>
    <name evidence="1" type="primary">eif1a2</name>
    <name type="ordered locus">Mbar_A2540</name>
</gene>
<feature type="chain" id="PRO_0000259367" description="Translation initiation factor 1A 2">
    <location>
        <begin position="1"/>
        <end position="115"/>
    </location>
</feature>
<feature type="domain" description="S1-like" evidence="1">
    <location>
        <begin position="27"/>
        <end position="101"/>
    </location>
</feature>
<feature type="region of interest" description="Disordered" evidence="2">
    <location>
        <begin position="1"/>
        <end position="34"/>
    </location>
</feature>
<feature type="compositionally biased region" description="Basic and acidic residues" evidence="2">
    <location>
        <begin position="22"/>
        <end position="34"/>
    </location>
</feature>